<evidence type="ECO:0000250" key="1">
    <source>
        <dbReference type="UniProtKB" id="Q8GTM0"/>
    </source>
</evidence>
<evidence type="ECO:0000269" key="2">
    <source>
    </source>
</evidence>
<evidence type="ECO:0000305" key="3"/>
<proteinExistence type="evidence at protein level"/>
<reference evidence="3" key="1">
    <citation type="journal article" date="2007" name="Biochimie">
        <title>Seed defensins from T. kiharae and related species: Genome localization of defensin-encoding genes.</title>
        <authorList>
            <person name="Odintsova T.I."/>
            <person name="Egorov T.A."/>
            <person name="Musolyamov A.K."/>
            <person name="Odintsova M.S."/>
            <person name="Pukhalsky V.A."/>
            <person name="Grishin E.V."/>
        </authorList>
    </citation>
    <scope>PROTEIN SEQUENCE</scope>
    <scope>MASS SPECTROMETRY</scope>
    <source>
        <tissue evidence="2">Seed</tissue>
    </source>
</reference>
<comment type="function">
    <text evidence="1">Plant defense peptide.</text>
</comment>
<comment type="mass spectrometry"/>
<comment type="similarity">
    <text evidence="3">Belongs to the DEFL family.</text>
</comment>
<keyword id="KW-0929">Antimicrobial</keyword>
<keyword id="KW-0903">Direct protein sequencing</keyword>
<keyword id="KW-1015">Disulfide bond</keyword>
<keyword id="KW-0295">Fungicide</keyword>
<keyword id="KW-0611">Plant defense</keyword>
<accession>P84969</accession>
<dbReference type="SMR" id="P84969"/>
<dbReference type="GO" id="GO:0050832">
    <property type="term" value="P:defense response to fungus"/>
    <property type="evidence" value="ECO:0007669"/>
    <property type="project" value="UniProtKB-KW"/>
</dbReference>
<dbReference type="GO" id="GO:0031640">
    <property type="term" value="P:killing of cells of another organism"/>
    <property type="evidence" value="ECO:0007669"/>
    <property type="project" value="UniProtKB-KW"/>
</dbReference>
<dbReference type="Gene3D" id="3.30.30.10">
    <property type="entry name" value="Knottin, scorpion toxin-like"/>
    <property type="match status" value="1"/>
</dbReference>
<dbReference type="InterPro" id="IPR008176">
    <property type="entry name" value="Defensin_plant"/>
</dbReference>
<dbReference type="InterPro" id="IPR003614">
    <property type="entry name" value="Scorpion_toxin-like"/>
</dbReference>
<dbReference type="InterPro" id="IPR036574">
    <property type="entry name" value="Scorpion_toxin-like_sf"/>
</dbReference>
<dbReference type="Pfam" id="PF00304">
    <property type="entry name" value="Gamma-thionin"/>
    <property type="match status" value="1"/>
</dbReference>
<dbReference type="PRINTS" id="PR00288">
    <property type="entry name" value="PUROTHIONIN"/>
</dbReference>
<dbReference type="SMART" id="SM00505">
    <property type="entry name" value="Knot1"/>
    <property type="match status" value="1"/>
</dbReference>
<dbReference type="SUPFAM" id="SSF57095">
    <property type="entry name" value="Scorpion toxin-like"/>
    <property type="match status" value="1"/>
</dbReference>
<dbReference type="PROSITE" id="PS00940">
    <property type="entry name" value="GAMMA_THIONIN"/>
    <property type="match status" value="1"/>
</dbReference>
<sequence>RECRSQSKQFVGLCVSDTNCASVCLTEHFPGGKCDGYRRCFCTKDC</sequence>
<organism>
    <name type="scientific">Triticum kiharae</name>
    <name type="common">Wheat</name>
    <dbReference type="NCBI Taxonomy" id="376535"/>
    <lineage>
        <taxon>Eukaryota</taxon>
        <taxon>Viridiplantae</taxon>
        <taxon>Streptophyta</taxon>
        <taxon>Embryophyta</taxon>
        <taxon>Tracheophyta</taxon>
        <taxon>Spermatophyta</taxon>
        <taxon>Magnoliopsida</taxon>
        <taxon>Liliopsida</taxon>
        <taxon>Poales</taxon>
        <taxon>Poaceae</taxon>
        <taxon>BOP clade</taxon>
        <taxon>Pooideae</taxon>
        <taxon>Triticodae</taxon>
        <taxon>Triticeae</taxon>
        <taxon>Triticinae</taxon>
        <taxon>Triticum</taxon>
    </lineage>
</organism>
<name>DEF61_TRIKH</name>
<protein>
    <recommendedName>
        <fullName>Defensin Tk-AMP-D6.1</fullName>
    </recommendedName>
</protein>
<feature type="chain" id="PRO_0000287894" description="Defensin Tk-AMP-D6.1">
    <location>
        <begin position="1"/>
        <end position="46"/>
    </location>
</feature>
<feature type="disulfide bond" evidence="1">
    <location>
        <begin position="3"/>
        <end position="46"/>
    </location>
</feature>
<feature type="disulfide bond" evidence="1">
    <location>
        <begin position="14"/>
        <end position="34"/>
    </location>
</feature>
<feature type="disulfide bond" evidence="1">
    <location>
        <begin position="20"/>
        <end position="40"/>
    </location>
</feature>
<feature type="disulfide bond" evidence="1">
    <location>
        <begin position="24"/>
        <end position="42"/>
    </location>
</feature>